<organism>
    <name type="scientific">Homo sapiens</name>
    <name type="common">Human</name>
    <dbReference type="NCBI Taxonomy" id="9606"/>
    <lineage>
        <taxon>Eukaryota</taxon>
        <taxon>Metazoa</taxon>
        <taxon>Chordata</taxon>
        <taxon>Craniata</taxon>
        <taxon>Vertebrata</taxon>
        <taxon>Euteleostomi</taxon>
        <taxon>Mammalia</taxon>
        <taxon>Eutheria</taxon>
        <taxon>Euarchontoglires</taxon>
        <taxon>Primates</taxon>
        <taxon>Haplorrhini</taxon>
        <taxon>Catarrhini</taxon>
        <taxon>Hominidae</taxon>
        <taxon>Homo</taxon>
    </lineage>
</organism>
<keyword id="KW-0002">3D-structure</keyword>
<keyword id="KW-0025">Alternative splicing</keyword>
<keyword id="KW-0053">Apoptosis</keyword>
<keyword id="KW-0378">Hydrolase</keyword>
<keyword id="KW-0597">Phosphoprotein</keyword>
<keyword id="KW-0645">Protease</keyword>
<keyword id="KW-1267">Proteomics identification</keyword>
<keyword id="KW-1185">Reference proteome</keyword>
<keyword id="KW-0788">Thiol protease</keyword>
<keyword id="KW-0832">Ubl conjugation</keyword>
<keyword id="KW-0865">Zymogen</keyword>
<dbReference type="EC" id="3.4.22.62" evidence="14 17 18"/>
<dbReference type="EMBL" id="U56390">
    <property type="protein sequence ID" value="AAC50640.1"/>
    <property type="molecule type" value="mRNA"/>
</dbReference>
<dbReference type="EMBL" id="U60521">
    <property type="protein sequence ID" value="AAC50776.1"/>
    <property type="molecule type" value="mRNA"/>
</dbReference>
<dbReference type="EMBL" id="AB019205">
    <property type="protein sequence ID" value="BAA82697.1"/>
    <property type="molecule type" value="Genomic_DNA"/>
</dbReference>
<dbReference type="EMBL" id="AF093130">
    <property type="protein sequence ID" value="AAD12248.1"/>
    <property type="molecule type" value="mRNA"/>
</dbReference>
<dbReference type="EMBL" id="AB015653">
    <property type="protein sequence ID" value="BAA78780.1"/>
    <property type="molecule type" value="mRNA"/>
</dbReference>
<dbReference type="EMBL" id="AB020979">
    <property type="protein sequence ID" value="BAA87905.1"/>
    <property type="molecule type" value="mRNA"/>
</dbReference>
<dbReference type="EMBL" id="AF110376">
    <property type="protein sequence ID" value="AAD13615.1"/>
    <property type="molecule type" value="mRNA"/>
</dbReference>
<dbReference type="EMBL" id="AY732490">
    <property type="protein sequence ID" value="AAV33129.1"/>
    <property type="molecule type" value="mRNA"/>
</dbReference>
<dbReference type="EMBL" id="AY214168">
    <property type="protein sequence ID" value="AAO21133.1"/>
    <property type="molecule type" value="Genomic_DNA"/>
</dbReference>
<dbReference type="EMBL" id="BT006911">
    <property type="protein sequence ID" value="AAP35557.1"/>
    <property type="molecule type" value="mRNA"/>
</dbReference>
<dbReference type="EMBL" id="AK303743">
    <property type="protein sequence ID" value="BAG64715.1"/>
    <property type="molecule type" value="mRNA"/>
</dbReference>
<dbReference type="EMBL" id="AL512883">
    <property type="status" value="NOT_ANNOTATED_CDS"/>
    <property type="molecule type" value="Genomic_DNA"/>
</dbReference>
<dbReference type="EMBL" id="CH471167">
    <property type="protein sequence ID" value="EAW51730.1"/>
    <property type="molecule type" value="Genomic_DNA"/>
</dbReference>
<dbReference type="EMBL" id="CH471167">
    <property type="protein sequence ID" value="EAW51731.1"/>
    <property type="molecule type" value="Genomic_DNA"/>
</dbReference>
<dbReference type="EMBL" id="BC002452">
    <property type="protein sequence ID" value="AAH02452.1"/>
    <property type="molecule type" value="mRNA"/>
</dbReference>
<dbReference type="EMBL" id="BC006463">
    <property type="protein sequence ID" value="AAH06463.1"/>
    <property type="molecule type" value="mRNA"/>
</dbReference>
<dbReference type="CCDS" id="CCDS158.1">
    <molecule id="P55211-1"/>
</dbReference>
<dbReference type="CCDS" id="CCDS159.2">
    <molecule id="P55211-4"/>
</dbReference>
<dbReference type="CCDS" id="CCDS59995.1">
    <molecule id="P55211-2"/>
</dbReference>
<dbReference type="PIR" id="G02635">
    <property type="entry name" value="G02635"/>
</dbReference>
<dbReference type="RefSeq" id="NP_001220.2">
    <molecule id="P55211-1"/>
    <property type="nucleotide sequence ID" value="NM_001229.4"/>
</dbReference>
<dbReference type="RefSeq" id="NP_001264983.1">
    <molecule id="P55211-2"/>
    <property type="nucleotide sequence ID" value="NM_001278054.2"/>
</dbReference>
<dbReference type="RefSeq" id="NP_127463.2">
    <molecule id="P55211-4"/>
    <property type="nucleotide sequence ID" value="NM_032996.3"/>
</dbReference>
<dbReference type="RefSeq" id="XP_005246071.1">
    <molecule id="P55211-4"/>
    <property type="nucleotide sequence ID" value="XM_005246014.3"/>
</dbReference>
<dbReference type="RefSeq" id="XP_054195099.1">
    <molecule id="P55211-4"/>
    <property type="nucleotide sequence ID" value="XM_054339124.1"/>
</dbReference>
<dbReference type="PDB" id="1JXQ">
    <property type="method" value="X-ray"/>
    <property type="resolution" value="2.80 A"/>
    <property type="chains" value="A/B/C/D=140-416"/>
</dbReference>
<dbReference type="PDB" id="1NW9">
    <property type="method" value="X-ray"/>
    <property type="resolution" value="2.40 A"/>
    <property type="chains" value="B=140-416"/>
</dbReference>
<dbReference type="PDB" id="2AR9">
    <property type="method" value="X-ray"/>
    <property type="resolution" value="2.80 A"/>
    <property type="chains" value="A/B/C/D=139-416"/>
</dbReference>
<dbReference type="PDB" id="3D9T">
    <property type="method" value="X-ray"/>
    <property type="resolution" value="1.50 A"/>
    <property type="chains" value="C/D=316-321"/>
</dbReference>
<dbReference type="PDB" id="3V3K">
    <property type="method" value="X-ray"/>
    <property type="resolution" value="3.49 A"/>
    <property type="chains" value="A/C/E/G/I/K/M/O=141-416"/>
</dbReference>
<dbReference type="PDB" id="3YGS">
    <property type="method" value="X-ray"/>
    <property type="resolution" value="2.50 A"/>
    <property type="chains" value="P=1-95"/>
</dbReference>
<dbReference type="PDB" id="4RHW">
    <property type="method" value="X-ray"/>
    <property type="resolution" value="2.10 A"/>
    <property type="chains" value="E/F=1-100"/>
</dbReference>
<dbReference type="PDB" id="5JUY">
    <property type="method" value="EM"/>
    <property type="resolution" value="4.10 A"/>
    <property type="chains" value="O/P/Q/R=1-95"/>
</dbReference>
<dbReference type="PDB" id="5WVC">
    <property type="method" value="X-ray"/>
    <property type="resolution" value="2.99 A"/>
    <property type="chains" value="B/D/F=1-128"/>
</dbReference>
<dbReference type="PDB" id="5WVE">
    <property type="method" value="EM"/>
    <property type="resolution" value="4.40 A"/>
    <property type="chains" value="S/T/U/V/Y=1-100"/>
</dbReference>
<dbReference type="PDBsum" id="1JXQ"/>
<dbReference type="PDBsum" id="1NW9"/>
<dbReference type="PDBsum" id="2AR9"/>
<dbReference type="PDBsum" id="3D9T"/>
<dbReference type="PDBsum" id="3V3K"/>
<dbReference type="PDBsum" id="3YGS"/>
<dbReference type="PDBsum" id="4RHW"/>
<dbReference type="PDBsum" id="5JUY"/>
<dbReference type="PDBsum" id="5WVC"/>
<dbReference type="PDBsum" id="5WVE"/>
<dbReference type="EMDB" id="EMD-8178"/>
<dbReference type="SMR" id="P55211"/>
<dbReference type="BioGRID" id="107292">
    <property type="interactions" value="60"/>
</dbReference>
<dbReference type="ComplexPortal" id="CPX-3762">
    <property type="entry name" value="Apoptosome"/>
</dbReference>
<dbReference type="ComplexPortal" id="CPX-991">
    <property type="entry name" value="Caspase-9 complex"/>
</dbReference>
<dbReference type="CORUM" id="P55211"/>
<dbReference type="DIP" id="DIP-27625N"/>
<dbReference type="ELM" id="P55211"/>
<dbReference type="FunCoup" id="P55211">
    <property type="interactions" value="1767"/>
</dbReference>
<dbReference type="IntAct" id="P55211">
    <property type="interactions" value="31"/>
</dbReference>
<dbReference type="MINT" id="P55211"/>
<dbReference type="STRING" id="9606.ENSP00000330237"/>
<dbReference type="BindingDB" id="P55211"/>
<dbReference type="ChEMBL" id="CHEMBL2273"/>
<dbReference type="DrugBank" id="DB00282">
    <property type="generic name" value="Pamidronic acid"/>
</dbReference>
<dbReference type="GuidetoPHARMACOLOGY" id="1625"/>
<dbReference type="MEROPS" id="C14.010"/>
<dbReference type="TCDB" id="8.A.217.1.1">
    <property type="family name" value="the apoptosis cell death regulator (acdr) family"/>
</dbReference>
<dbReference type="GlyGen" id="P55211">
    <property type="glycosylation" value="2 sites, 1 O-linked glycan (1 site)"/>
</dbReference>
<dbReference type="iPTMnet" id="P55211"/>
<dbReference type="PhosphoSitePlus" id="P55211"/>
<dbReference type="BioMuta" id="CASP9"/>
<dbReference type="DMDM" id="28558771"/>
<dbReference type="jPOST" id="P55211"/>
<dbReference type="MassIVE" id="P55211"/>
<dbReference type="PaxDb" id="9606-ENSP00000330237"/>
<dbReference type="PeptideAtlas" id="P55211"/>
<dbReference type="ProteomicsDB" id="56814">
    <molecule id="P55211-1"/>
</dbReference>
<dbReference type="ProteomicsDB" id="56815">
    <molecule id="P55211-2"/>
</dbReference>
<dbReference type="ProteomicsDB" id="56816">
    <molecule id="P55211-3"/>
</dbReference>
<dbReference type="ProteomicsDB" id="5741"/>
<dbReference type="Pumba" id="P55211"/>
<dbReference type="Antibodypedia" id="749">
    <property type="antibodies" value="1884 antibodies from 51 providers"/>
</dbReference>
<dbReference type="DNASU" id="842"/>
<dbReference type="Ensembl" id="ENST00000333868.10">
    <molecule id="P55211-1"/>
    <property type="protein sequence ID" value="ENSP00000330237.5"/>
    <property type="gene ID" value="ENSG00000132906.18"/>
</dbReference>
<dbReference type="Ensembl" id="ENST00000348549.9">
    <molecule id="P55211-2"/>
    <property type="protein sequence ID" value="ENSP00000255256.7"/>
    <property type="gene ID" value="ENSG00000132906.18"/>
</dbReference>
<dbReference type="Ensembl" id="ENST00000375890.8">
    <molecule id="P55211-4"/>
    <property type="protein sequence ID" value="ENSP00000365051.4"/>
    <property type="gene ID" value="ENSG00000132906.18"/>
</dbReference>
<dbReference type="GeneID" id="842"/>
<dbReference type="KEGG" id="hsa:842"/>
<dbReference type="MANE-Select" id="ENST00000333868.10">
    <property type="protein sequence ID" value="ENSP00000330237.5"/>
    <property type="RefSeq nucleotide sequence ID" value="NM_001229.5"/>
    <property type="RefSeq protein sequence ID" value="NP_001220.2"/>
</dbReference>
<dbReference type="UCSC" id="uc001awn.5">
    <molecule id="P55211-1"/>
    <property type="organism name" value="human"/>
</dbReference>
<dbReference type="AGR" id="HGNC:1511"/>
<dbReference type="CTD" id="842"/>
<dbReference type="DisGeNET" id="842"/>
<dbReference type="GeneCards" id="CASP9"/>
<dbReference type="HGNC" id="HGNC:1511">
    <property type="gene designation" value="CASP9"/>
</dbReference>
<dbReference type="HPA" id="ENSG00000132906">
    <property type="expression patterns" value="Low tissue specificity"/>
</dbReference>
<dbReference type="MIM" id="602234">
    <property type="type" value="gene"/>
</dbReference>
<dbReference type="neXtProt" id="NX_P55211"/>
<dbReference type="OpenTargets" id="ENSG00000132906"/>
<dbReference type="PharmGKB" id="PA26094"/>
<dbReference type="VEuPathDB" id="HostDB:ENSG00000132906"/>
<dbReference type="eggNOG" id="KOG3573">
    <property type="taxonomic scope" value="Eukaryota"/>
</dbReference>
<dbReference type="GeneTree" id="ENSGT00940000159698"/>
<dbReference type="HOGENOM" id="CLU_036904_5_0_1"/>
<dbReference type="InParanoid" id="P55211"/>
<dbReference type="OMA" id="PFQEGPV"/>
<dbReference type="OrthoDB" id="6044770at2759"/>
<dbReference type="PAN-GO" id="P55211">
    <property type="GO annotations" value="6 GO annotations based on evolutionary models"/>
</dbReference>
<dbReference type="PhylomeDB" id="P55211"/>
<dbReference type="TreeFam" id="TF102023"/>
<dbReference type="BioCyc" id="MetaCyc:HS05705-MONOMER"/>
<dbReference type="BRENDA" id="3.4.22.62">
    <property type="organism ID" value="2681"/>
</dbReference>
<dbReference type="PathwayCommons" id="P55211"/>
<dbReference type="Reactome" id="R-HSA-111458">
    <property type="pathway name" value="Formation of apoptosome"/>
</dbReference>
<dbReference type="Reactome" id="R-HSA-111459">
    <property type="pathway name" value="Activation of caspases through apoptosome-mediated cleavage"/>
</dbReference>
<dbReference type="Reactome" id="R-HSA-111463">
    <property type="pathway name" value="SMAC (DIABLO) binds to IAPs"/>
</dbReference>
<dbReference type="Reactome" id="R-HSA-111464">
    <property type="pathway name" value="SMAC(DIABLO)-mediated dissociation of IAP:caspase complexes"/>
</dbReference>
<dbReference type="Reactome" id="R-HSA-168638">
    <property type="pathway name" value="NOD1/2 Signaling Pathway"/>
</dbReference>
<dbReference type="Reactome" id="R-HSA-198323">
    <property type="pathway name" value="AKT phosphorylates targets in the cytosol"/>
</dbReference>
<dbReference type="Reactome" id="R-HSA-418889">
    <property type="pathway name" value="Caspase activation via Dependence Receptors in the absence of ligand"/>
</dbReference>
<dbReference type="Reactome" id="R-HSA-5674400">
    <property type="pathway name" value="Constitutive Signaling by AKT1 E17K in Cancer"/>
</dbReference>
<dbReference type="Reactome" id="R-HSA-9627069">
    <property type="pathway name" value="Regulation of the apoptosome activity"/>
</dbReference>
<dbReference type="SABIO-RK" id="P55211"/>
<dbReference type="SignaLink" id="P55211"/>
<dbReference type="SIGNOR" id="P55211"/>
<dbReference type="BioGRID-ORCS" id="842">
    <property type="hits" value="16 hits in 1164 CRISPR screens"/>
</dbReference>
<dbReference type="EvolutionaryTrace" id="P55211"/>
<dbReference type="GeneWiki" id="Caspase-9"/>
<dbReference type="GenomeRNAi" id="842"/>
<dbReference type="Pharos" id="P55211">
    <property type="development level" value="Tchem"/>
</dbReference>
<dbReference type="PRO" id="PR:P55211"/>
<dbReference type="Proteomes" id="UP000005640">
    <property type="component" value="Chromosome 1"/>
</dbReference>
<dbReference type="RNAct" id="P55211">
    <property type="molecule type" value="protein"/>
</dbReference>
<dbReference type="Bgee" id="ENSG00000132906">
    <property type="expression patterns" value="Expressed in adrenal tissue and 204 other cell types or tissues"/>
</dbReference>
<dbReference type="ExpressionAtlas" id="P55211">
    <property type="expression patterns" value="baseline and differential"/>
</dbReference>
<dbReference type="GO" id="GO:0043293">
    <property type="term" value="C:apoptosome"/>
    <property type="evidence" value="ECO:0000314"/>
    <property type="project" value="UniProtKB"/>
</dbReference>
<dbReference type="GO" id="GO:0008303">
    <property type="term" value="C:caspase complex"/>
    <property type="evidence" value="ECO:0000353"/>
    <property type="project" value="ComplexPortal"/>
</dbReference>
<dbReference type="GO" id="GO:0005737">
    <property type="term" value="C:cytoplasm"/>
    <property type="evidence" value="ECO:0000318"/>
    <property type="project" value="GO_Central"/>
</dbReference>
<dbReference type="GO" id="GO:0005829">
    <property type="term" value="C:cytosol"/>
    <property type="evidence" value="ECO:0000314"/>
    <property type="project" value="UniProtKB"/>
</dbReference>
<dbReference type="GO" id="GO:0005739">
    <property type="term" value="C:mitochondrion"/>
    <property type="evidence" value="ECO:0000314"/>
    <property type="project" value="UniProt"/>
</dbReference>
<dbReference type="GO" id="GO:0005634">
    <property type="term" value="C:nucleus"/>
    <property type="evidence" value="ECO:0007669"/>
    <property type="project" value="Ensembl"/>
</dbReference>
<dbReference type="GO" id="GO:0032991">
    <property type="term" value="C:protein-containing complex"/>
    <property type="evidence" value="ECO:0000314"/>
    <property type="project" value="UniProtKB"/>
</dbReference>
<dbReference type="GO" id="GO:0004197">
    <property type="term" value="F:cysteine-type endopeptidase activity"/>
    <property type="evidence" value="ECO:0000314"/>
    <property type="project" value="UniProtKB"/>
</dbReference>
<dbReference type="GO" id="GO:0008047">
    <property type="term" value="F:enzyme activator activity"/>
    <property type="evidence" value="ECO:0000304"/>
    <property type="project" value="ProtInc"/>
</dbReference>
<dbReference type="GO" id="GO:0042802">
    <property type="term" value="F:identical protein binding"/>
    <property type="evidence" value="ECO:0000353"/>
    <property type="project" value="IntAct"/>
</dbReference>
<dbReference type="GO" id="GO:0008233">
    <property type="term" value="F:peptidase activity"/>
    <property type="evidence" value="ECO:0000314"/>
    <property type="project" value="BHF-UCL"/>
</dbReference>
<dbReference type="GO" id="GO:0019901">
    <property type="term" value="F:protein kinase binding"/>
    <property type="evidence" value="ECO:0000314"/>
    <property type="project" value="UniProtKB"/>
</dbReference>
<dbReference type="GO" id="GO:0017124">
    <property type="term" value="F:SH3 domain binding"/>
    <property type="evidence" value="ECO:0000314"/>
    <property type="project" value="UniProtKB"/>
</dbReference>
<dbReference type="GO" id="GO:0006915">
    <property type="term" value="P:apoptotic process"/>
    <property type="evidence" value="ECO:0000315"/>
    <property type="project" value="UniProtKB"/>
</dbReference>
<dbReference type="GO" id="GO:0071549">
    <property type="term" value="P:cellular response to dexamethasone stimulus"/>
    <property type="evidence" value="ECO:0007669"/>
    <property type="project" value="Ensembl"/>
</dbReference>
<dbReference type="GO" id="GO:0034644">
    <property type="term" value="P:cellular response to UV"/>
    <property type="evidence" value="ECO:0000314"/>
    <property type="project" value="UniProtKB"/>
</dbReference>
<dbReference type="GO" id="GO:0006974">
    <property type="term" value="P:DNA damage response"/>
    <property type="evidence" value="ECO:0000314"/>
    <property type="project" value="UniProtKB"/>
</dbReference>
<dbReference type="GO" id="GO:1904019">
    <property type="term" value="P:epithelial cell apoptotic process"/>
    <property type="evidence" value="ECO:0007669"/>
    <property type="project" value="Ensembl"/>
</dbReference>
<dbReference type="GO" id="GO:0044346">
    <property type="term" value="P:fibroblast apoptotic process"/>
    <property type="evidence" value="ECO:0007669"/>
    <property type="project" value="Ensembl"/>
</dbReference>
<dbReference type="GO" id="GO:0034349">
    <property type="term" value="P:glial cell apoptotic process"/>
    <property type="evidence" value="ECO:0007669"/>
    <property type="project" value="Ensembl"/>
</dbReference>
<dbReference type="GO" id="GO:0097193">
    <property type="term" value="P:intrinsic apoptotic signaling pathway"/>
    <property type="evidence" value="ECO:0000314"/>
    <property type="project" value="UniProt"/>
</dbReference>
<dbReference type="GO" id="GO:0008630">
    <property type="term" value="P:intrinsic apoptotic signaling pathway in response to DNA damage"/>
    <property type="evidence" value="ECO:0000315"/>
    <property type="project" value="UniProtKB"/>
</dbReference>
<dbReference type="GO" id="GO:0001822">
    <property type="term" value="P:kidney development"/>
    <property type="evidence" value="ECO:0007669"/>
    <property type="project" value="Ensembl"/>
</dbReference>
<dbReference type="GO" id="GO:0071887">
    <property type="term" value="P:leukocyte apoptotic process"/>
    <property type="evidence" value="ECO:0007669"/>
    <property type="project" value="Ensembl"/>
</dbReference>
<dbReference type="GO" id="GO:0051402">
    <property type="term" value="P:neuron apoptotic process"/>
    <property type="evidence" value="ECO:0007669"/>
    <property type="project" value="Ensembl"/>
</dbReference>
<dbReference type="GO" id="GO:0030220">
    <property type="term" value="P:platelet formation"/>
    <property type="evidence" value="ECO:0000304"/>
    <property type="project" value="UniProtKB"/>
</dbReference>
<dbReference type="GO" id="GO:0043065">
    <property type="term" value="P:positive regulation of apoptotic process"/>
    <property type="evidence" value="ECO:0000315"/>
    <property type="project" value="UniProtKB"/>
</dbReference>
<dbReference type="GO" id="GO:1900119">
    <property type="term" value="P:positive regulation of execution phase of apoptosis"/>
    <property type="evidence" value="ECO:0000314"/>
    <property type="project" value="UniProt"/>
</dbReference>
<dbReference type="GO" id="GO:0043525">
    <property type="term" value="P:positive regulation of neuron apoptotic process"/>
    <property type="evidence" value="ECO:0000318"/>
    <property type="project" value="GO_Central"/>
</dbReference>
<dbReference type="GO" id="GO:0051604">
    <property type="term" value="P:protein maturation"/>
    <property type="evidence" value="ECO:0000314"/>
    <property type="project" value="UniProt"/>
</dbReference>
<dbReference type="GO" id="GO:0016485">
    <property type="term" value="P:protein processing"/>
    <property type="evidence" value="ECO:0007669"/>
    <property type="project" value="Ensembl"/>
</dbReference>
<dbReference type="GO" id="GO:0072347">
    <property type="term" value="P:response to anesthetic"/>
    <property type="evidence" value="ECO:0007669"/>
    <property type="project" value="Ensembl"/>
</dbReference>
<dbReference type="GO" id="GO:0032025">
    <property type="term" value="P:response to cobalt ion"/>
    <property type="evidence" value="ECO:0007669"/>
    <property type="project" value="Ensembl"/>
</dbReference>
<dbReference type="GO" id="GO:0032355">
    <property type="term" value="P:response to estradiol"/>
    <property type="evidence" value="ECO:0007669"/>
    <property type="project" value="Ensembl"/>
</dbReference>
<dbReference type="GO" id="GO:0001666">
    <property type="term" value="P:response to hypoxia"/>
    <property type="evidence" value="ECO:0007669"/>
    <property type="project" value="Ensembl"/>
</dbReference>
<dbReference type="GO" id="GO:0002931">
    <property type="term" value="P:response to ischemia"/>
    <property type="evidence" value="ECO:0007669"/>
    <property type="project" value="Ensembl"/>
</dbReference>
<dbReference type="GO" id="GO:0032496">
    <property type="term" value="P:response to lipopolysaccharide"/>
    <property type="evidence" value="ECO:0007669"/>
    <property type="project" value="Ensembl"/>
</dbReference>
<dbReference type="GO" id="GO:0042770">
    <property type="term" value="P:signal transduction in response to DNA damage"/>
    <property type="evidence" value="ECO:0000314"/>
    <property type="project" value="UniProtKB"/>
</dbReference>
<dbReference type="CDD" id="cd08326">
    <property type="entry name" value="CARD_CASP9"/>
    <property type="match status" value="1"/>
</dbReference>
<dbReference type="CDD" id="cd00032">
    <property type="entry name" value="CASc"/>
    <property type="match status" value="1"/>
</dbReference>
<dbReference type="DisProt" id="DP02860"/>
<dbReference type="FunFam" id="1.10.533.10:FF:000041">
    <property type="entry name" value="Caspase 9"/>
    <property type="match status" value="1"/>
</dbReference>
<dbReference type="FunFam" id="3.40.50.1460:FF:000012">
    <property type="entry name" value="Caspase 9"/>
    <property type="match status" value="1"/>
</dbReference>
<dbReference type="Gene3D" id="3.40.50.1460">
    <property type="match status" value="1"/>
</dbReference>
<dbReference type="Gene3D" id="1.10.533.10">
    <property type="entry name" value="Death Domain, Fas"/>
    <property type="match status" value="1"/>
</dbReference>
<dbReference type="IDEAL" id="IID00718"/>
<dbReference type="InterPro" id="IPR001315">
    <property type="entry name" value="CARD"/>
</dbReference>
<dbReference type="InterPro" id="IPR042147">
    <property type="entry name" value="CARD_CASP9"/>
</dbReference>
<dbReference type="InterPro" id="IPR029030">
    <property type="entry name" value="Caspase-like_dom_sf"/>
</dbReference>
<dbReference type="InterPro" id="IPR033139">
    <property type="entry name" value="Caspase_cys_AS"/>
</dbReference>
<dbReference type="InterPro" id="IPR016129">
    <property type="entry name" value="Caspase_his_AS"/>
</dbReference>
<dbReference type="InterPro" id="IPR011029">
    <property type="entry name" value="DEATH-like_dom_sf"/>
</dbReference>
<dbReference type="InterPro" id="IPR002398">
    <property type="entry name" value="Pept_C14"/>
</dbReference>
<dbReference type="InterPro" id="IPR011600">
    <property type="entry name" value="Pept_C14_caspase"/>
</dbReference>
<dbReference type="InterPro" id="IPR002138">
    <property type="entry name" value="Pept_C14_p10"/>
</dbReference>
<dbReference type="InterPro" id="IPR001309">
    <property type="entry name" value="Pept_C14_p20"/>
</dbReference>
<dbReference type="InterPro" id="IPR015917">
    <property type="entry name" value="Pept_C14A"/>
</dbReference>
<dbReference type="PANTHER" id="PTHR47901">
    <property type="entry name" value="CASPASE RECRUITMENT DOMAIN-CONTAINING PROTEIN 18"/>
    <property type="match status" value="1"/>
</dbReference>
<dbReference type="PANTHER" id="PTHR47901:SF8">
    <property type="entry name" value="CASPASE-3"/>
    <property type="match status" value="1"/>
</dbReference>
<dbReference type="Pfam" id="PF00619">
    <property type="entry name" value="CARD"/>
    <property type="match status" value="1"/>
</dbReference>
<dbReference type="Pfam" id="PF00656">
    <property type="entry name" value="Peptidase_C14"/>
    <property type="match status" value="1"/>
</dbReference>
<dbReference type="PIRSF" id="PIRSF038001">
    <property type="entry name" value="Caspase_ICE"/>
    <property type="match status" value="1"/>
</dbReference>
<dbReference type="PRINTS" id="PR00376">
    <property type="entry name" value="IL1BCENZYME"/>
</dbReference>
<dbReference type="SMART" id="SM00114">
    <property type="entry name" value="CARD"/>
    <property type="match status" value="1"/>
</dbReference>
<dbReference type="SMART" id="SM00115">
    <property type="entry name" value="CASc"/>
    <property type="match status" value="1"/>
</dbReference>
<dbReference type="SUPFAM" id="SSF52129">
    <property type="entry name" value="Caspase-like"/>
    <property type="match status" value="1"/>
</dbReference>
<dbReference type="SUPFAM" id="SSF47986">
    <property type="entry name" value="DEATH domain"/>
    <property type="match status" value="1"/>
</dbReference>
<dbReference type="PROSITE" id="PS50209">
    <property type="entry name" value="CARD"/>
    <property type="match status" value="1"/>
</dbReference>
<dbReference type="PROSITE" id="PS01122">
    <property type="entry name" value="CASPASE_CYS"/>
    <property type="match status" value="1"/>
</dbReference>
<dbReference type="PROSITE" id="PS01121">
    <property type="entry name" value="CASPASE_HIS"/>
    <property type="match status" value="1"/>
</dbReference>
<dbReference type="PROSITE" id="PS50207">
    <property type="entry name" value="CASPASE_P10"/>
    <property type="match status" value="1"/>
</dbReference>
<dbReference type="PROSITE" id="PS50208">
    <property type="entry name" value="CASPASE_P20"/>
    <property type="match status" value="1"/>
</dbReference>
<sequence>MDEADRRLLRRCRLRLVEELQVDQLWDALLSRELFRPHMIEDIQRAGSGSRRDQARQLIIDLETRGSQALPLFISCLEDTGQDMLASFLRTNRQAAKLSKPTLENLTPVVLRPEIRKPEVLRPETPRPVDIGSGGFGDVGALESLRGNADLAYILSMEPCGHCLIINNVNFCRESGLRTRTGSNIDCEKLRRRFSSLHFMVEVKGDLTAKKMVLALLELAQQDHGALDCCVVVILSHGCQASHLQFPGAVYGTDGCPVSVEKIVNIFNGTSCPSLGGKPKLFFIQACGGEQKDHGFEVASTSPEDESPGSNPEPDATPFQEGLRTFDQLDAISSLPTPSDIFVSYSTFPGFVSWRDPKSGSWYVETLDDIFEQWAHSEDLQSLLLRVANAVSVKGIYKQMPGCFNFLRKKLFFKTS</sequence>
<reference key="1">
    <citation type="journal article" date="1996" name="J. Biol. Chem.">
        <title>ICE-LAP6, a novel member of the ICE/Ced-3 gene family, is activated by the cytotoxic T cell protease granzyme B.</title>
        <authorList>
            <person name="Duan H."/>
            <person name="Orth K."/>
            <person name="Chinnaiyan A.M."/>
            <person name="Poirier G.G."/>
            <person name="Froelich C.J."/>
            <person name="He W.-W."/>
            <person name="Dixit V.M."/>
        </authorList>
    </citation>
    <scope>NUCLEOTIDE SEQUENCE [MRNA] (ISOFORM 1)</scope>
    <scope>VARIANTS VAL-28 AND ARG-221</scope>
</reference>
<reference key="2">
    <citation type="journal article" date="1996" name="J. Biol. Chem.">
        <title>The Ced-3/interleukin 1beta converting enzyme-like homolog Mch6 and the lamin-cleaving enzyme Mch2alpha are substrates for the apoptotic mediator CPP32.</title>
        <authorList>
            <person name="Srinivasula S.M."/>
            <person name="Fernandes-Alnemri T."/>
            <person name="Zangrilli J."/>
            <person name="Robertson N."/>
            <person name="Armstrong R.C."/>
            <person name="Wang L."/>
            <person name="Trapani J.A."/>
            <person name="Tomaselli K.J."/>
            <person name="Litwack G."/>
            <person name="Alnemri E.S."/>
        </authorList>
    </citation>
    <scope>NUCLEOTIDE SEQUENCE [MRNA] (ISOFORM 1)</scope>
    <scope>PROTEOLYTIC PROCESSING</scope>
    <source>
        <tissue>T-cell</tissue>
    </source>
</reference>
<reference key="3">
    <citation type="journal article" date="1999" name="Mamm. Genome">
        <title>Genomic organization of the human caspase-9 gene on chromosome 1p36.1-p36.3.</title>
        <authorList>
            <person name="Hadano S."/>
            <person name="Nasir J."/>
            <person name="Nichol K."/>
            <person name="Rasper D.M."/>
            <person name="Vaillancourt J.P."/>
            <person name="Sherer S.W."/>
            <person name="Beatty B.G."/>
            <person name="Ikeda J.E."/>
            <person name="Nicholson D.W."/>
            <person name="Hayden M.R."/>
        </authorList>
    </citation>
    <scope>NUCLEOTIDE SEQUENCE [GENOMIC DNA]</scope>
</reference>
<reference key="4">
    <citation type="journal article" date="1999" name="Cancer Res.">
        <title>Identification of an endogenous dominant-negative short isoform of caspase-9 that can regulate apoptosis.</title>
        <authorList>
            <person name="Srinivasula S.M."/>
            <person name="Ahmad M."/>
            <person name="Guo Y."/>
            <person name="Zhan Y."/>
            <person name="Lazebnik Y."/>
            <person name="Fernandes-Alnemri T."/>
            <person name="Alnemri E.S."/>
        </authorList>
    </citation>
    <scope>NUCLEOTIDE SEQUENCE [MRNA] (ISOFORM 2)</scope>
    <scope>FUNCTION (ISOFORM 2)</scope>
</reference>
<reference key="5">
    <citation type="submission" date="1998-06" db="EMBL/GenBank/DDBJ databases">
        <title>Molecular cloning and sequencing of a cDNA predicting an alternative form of pro-caspase-9 from human gastric cancer cell lines.</title>
        <authorList>
            <person name="Izawa M."/>
            <person name="Mori T."/>
            <person name="Ito H."/>
            <person name="Sairenji T."/>
        </authorList>
    </citation>
    <scope>NUCLEOTIDE SEQUENCE [MRNA] (ISOFORM 2)</scope>
    <source>
        <tissue>Stomach cancer</tissue>
    </source>
</reference>
<reference key="6">
    <citation type="submission" date="1998-12" db="EMBL/GenBank/DDBJ databases">
        <title>A novel splicing product of human caspase-9 lacking protease activity.</title>
        <authorList>
            <person name="Miho Y."/>
            <person name="Momoi T."/>
            <person name="Fujita E."/>
        </authorList>
    </citation>
    <scope>NUCLEOTIDE SEQUENCE [MRNA] (ISOFORM 2)</scope>
</reference>
<reference key="7">
    <citation type="journal article" date="1999" name="J. Biol. Chem.">
        <title>A caspase-9 variant missing the catalytic site is an endogenous inhibitor of apoptosis.</title>
        <authorList>
            <person name="Seol D.W."/>
            <person name="Billiar T.R."/>
        </authorList>
    </citation>
    <scope>NUCLEOTIDE SEQUENCE [MRNA] (ISOFORM 2)</scope>
    <scope>VARIANT VAL-28</scope>
</reference>
<reference key="8">
    <citation type="journal article" date="2006" name="Life Sci.">
        <title>Cloning of a novel human caspase-9 splice variant containing only the CARD domain.</title>
        <authorList>
            <person name="Wang P."/>
            <person name="Shi T."/>
            <person name="Ma D."/>
        </authorList>
    </citation>
    <scope>NUCLEOTIDE SEQUENCE [MRNA] (ISOFORM 3)</scope>
    <scope>VARIANT VAL-28</scope>
</reference>
<reference key="9">
    <citation type="submission" date="2003-01" db="EMBL/GenBank/DDBJ databases">
        <authorList>
            <consortium name="NIEHS SNPs program"/>
        </authorList>
    </citation>
    <scope>NUCLEOTIDE SEQUENCE [GENOMIC DNA]</scope>
    <scope>VARIANTS VAL-28; LEU-99; ILE-102; VAL-106; ASP-114; HIS-173 AND ARG-221</scope>
</reference>
<reference key="10">
    <citation type="submission" date="2003-05" db="EMBL/GenBank/DDBJ databases">
        <title>Cloning of human full-length CDSs in BD Creator(TM) system donor vector.</title>
        <authorList>
            <person name="Kalnine N."/>
            <person name="Chen X."/>
            <person name="Rolfs A."/>
            <person name="Halleck A."/>
            <person name="Hines L."/>
            <person name="Eisenstein S."/>
            <person name="Koundinya M."/>
            <person name="Raphael J."/>
            <person name="Moreira D."/>
            <person name="Kelley T."/>
            <person name="LaBaer J."/>
            <person name="Lin Y."/>
            <person name="Phelan M."/>
            <person name="Farmer A."/>
        </authorList>
    </citation>
    <scope>NUCLEOTIDE SEQUENCE [LARGE SCALE MRNA] (ISOFORM 1)</scope>
</reference>
<reference key="11">
    <citation type="journal article" date="2004" name="Nat. Genet.">
        <title>Complete sequencing and characterization of 21,243 full-length human cDNAs.</title>
        <authorList>
            <person name="Ota T."/>
            <person name="Suzuki Y."/>
            <person name="Nishikawa T."/>
            <person name="Otsuki T."/>
            <person name="Sugiyama T."/>
            <person name="Irie R."/>
            <person name="Wakamatsu A."/>
            <person name="Hayashi K."/>
            <person name="Sato H."/>
            <person name="Nagai K."/>
            <person name="Kimura K."/>
            <person name="Makita H."/>
            <person name="Sekine M."/>
            <person name="Obayashi M."/>
            <person name="Nishi T."/>
            <person name="Shibahara T."/>
            <person name="Tanaka T."/>
            <person name="Ishii S."/>
            <person name="Yamamoto J."/>
            <person name="Saito K."/>
            <person name="Kawai Y."/>
            <person name="Isono Y."/>
            <person name="Nakamura Y."/>
            <person name="Nagahari K."/>
            <person name="Murakami K."/>
            <person name="Yasuda T."/>
            <person name="Iwayanagi T."/>
            <person name="Wagatsuma M."/>
            <person name="Shiratori A."/>
            <person name="Sudo H."/>
            <person name="Hosoiri T."/>
            <person name="Kaku Y."/>
            <person name="Kodaira H."/>
            <person name="Kondo H."/>
            <person name="Sugawara M."/>
            <person name="Takahashi M."/>
            <person name="Kanda K."/>
            <person name="Yokoi T."/>
            <person name="Furuya T."/>
            <person name="Kikkawa E."/>
            <person name="Omura Y."/>
            <person name="Abe K."/>
            <person name="Kamihara K."/>
            <person name="Katsuta N."/>
            <person name="Sato K."/>
            <person name="Tanikawa M."/>
            <person name="Yamazaki M."/>
            <person name="Ninomiya K."/>
            <person name="Ishibashi T."/>
            <person name="Yamashita H."/>
            <person name="Murakawa K."/>
            <person name="Fujimori K."/>
            <person name="Tanai H."/>
            <person name="Kimata M."/>
            <person name="Watanabe M."/>
            <person name="Hiraoka S."/>
            <person name="Chiba Y."/>
            <person name="Ishida S."/>
            <person name="Ono Y."/>
            <person name="Takiguchi S."/>
            <person name="Watanabe S."/>
            <person name="Yosida M."/>
            <person name="Hotuta T."/>
            <person name="Kusano J."/>
            <person name="Kanehori K."/>
            <person name="Takahashi-Fujii A."/>
            <person name="Hara H."/>
            <person name="Tanase T.-O."/>
            <person name="Nomura Y."/>
            <person name="Togiya S."/>
            <person name="Komai F."/>
            <person name="Hara R."/>
            <person name="Takeuchi K."/>
            <person name="Arita M."/>
            <person name="Imose N."/>
            <person name="Musashino K."/>
            <person name="Yuuki H."/>
            <person name="Oshima A."/>
            <person name="Sasaki N."/>
            <person name="Aotsuka S."/>
            <person name="Yoshikawa Y."/>
            <person name="Matsunawa H."/>
            <person name="Ichihara T."/>
            <person name="Shiohata N."/>
            <person name="Sano S."/>
            <person name="Moriya S."/>
            <person name="Momiyama H."/>
            <person name="Satoh N."/>
            <person name="Takami S."/>
            <person name="Terashima Y."/>
            <person name="Suzuki O."/>
            <person name="Nakagawa S."/>
            <person name="Senoh A."/>
            <person name="Mizoguchi H."/>
            <person name="Goto Y."/>
            <person name="Shimizu F."/>
            <person name="Wakebe H."/>
            <person name="Hishigaki H."/>
            <person name="Watanabe T."/>
            <person name="Sugiyama A."/>
            <person name="Takemoto M."/>
            <person name="Kawakami B."/>
            <person name="Yamazaki M."/>
            <person name="Watanabe K."/>
            <person name="Kumagai A."/>
            <person name="Itakura S."/>
            <person name="Fukuzumi Y."/>
            <person name="Fujimori Y."/>
            <person name="Komiyama M."/>
            <person name="Tashiro H."/>
            <person name="Tanigami A."/>
            <person name="Fujiwara T."/>
            <person name="Ono T."/>
            <person name="Yamada K."/>
            <person name="Fujii Y."/>
            <person name="Ozaki K."/>
            <person name="Hirao M."/>
            <person name="Ohmori Y."/>
            <person name="Kawabata A."/>
            <person name="Hikiji T."/>
            <person name="Kobatake N."/>
            <person name="Inagaki H."/>
            <person name="Ikema Y."/>
            <person name="Okamoto S."/>
            <person name="Okitani R."/>
            <person name="Kawakami T."/>
            <person name="Noguchi S."/>
            <person name="Itoh T."/>
            <person name="Shigeta K."/>
            <person name="Senba T."/>
            <person name="Matsumura K."/>
            <person name="Nakajima Y."/>
            <person name="Mizuno T."/>
            <person name="Morinaga M."/>
            <person name="Sasaki M."/>
            <person name="Togashi T."/>
            <person name="Oyama M."/>
            <person name="Hata H."/>
            <person name="Watanabe M."/>
            <person name="Komatsu T."/>
            <person name="Mizushima-Sugano J."/>
            <person name="Satoh T."/>
            <person name="Shirai Y."/>
            <person name="Takahashi Y."/>
            <person name="Nakagawa K."/>
            <person name="Okumura K."/>
            <person name="Nagase T."/>
            <person name="Nomura N."/>
            <person name="Kikuchi H."/>
            <person name="Masuho Y."/>
            <person name="Yamashita R."/>
            <person name="Nakai K."/>
            <person name="Yada T."/>
            <person name="Nakamura Y."/>
            <person name="Ohara O."/>
            <person name="Isogai T."/>
            <person name="Sugano S."/>
        </authorList>
    </citation>
    <scope>NUCLEOTIDE SEQUENCE [LARGE SCALE MRNA] (ISOFORM 4)</scope>
    <source>
        <tissue>Kidney</tissue>
    </source>
</reference>
<reference key="12">
    <citation type="journal article" date="2006" name="Nature">
        <title>The DNA sequence and biological annotation of human chromosome 1.</title>
        <authorList>
            <person name="Gregory S.G."/>
            <person name="Barlow K.F."/>
            <person name="McLay K.E."/>
            <person name="Kaul R."/>
            <person name="Swarbreck D."/>
            <person name="Dunham A."/>
            <person name="Scott C.E."/>
            <person name="Howe K.L."/>
            <person name="Woodfine K."/>
            <person name="Spencer C.C.A."/>
            <person name="Jones M.C."/>
            <person name="Gillson C."/>
            <person name="Searle S."/>
            <person name="Zhou Y."/>
            <person name="Kokocinski F."/>
            <person name="McDonald L."/>
            <person name="Evans R."/>
            <person name="Phillips K."/>
            <person name="Atkinson A."/>
            <person name="Cooper R."/>
            <person name="Jones C."/>
            <person name="Hall R.E."/>
            <person name="Andrews T.D."/>
            <person name="Lloyd C."/>
            <person name="Ainscough R."/>
            <person name="Almeida J.P."/>
            <person name="Ambrose K.D."/>
            <person name="Anderson F."/>
            <person name="Andrew R.W."/>
            <person name="Ashwell R.I.S."/>
            <person name="Aubin K."/>
            <person name="Babbage A.K."/>
            <person name="Bagguley C.L."/>
            <person name="Bailey J."/>
            <person name="Beasley H."/>
            <person name="Bethel G."/>
            <person name="Bird C.P."/>
            <person name="Bray-Allen S."/>
            <person name="Brown J.Y."/>
            <person name="Brown A.J."/>
            <person name="Buckley D."/>
            <person name="Burton J."/>
            <person name="Bye J."/>
            <person name="Carder C."/>
            <person name="Chapman J.C."/>
            <person name="Clark S.Y."/>
            <person name="Clarke G."/>
            <person name="Clee C."/>
            <person name="Cobley V."/>
            <person name="Collier R.E."/>
            <person name="Corby N."/>
            <person name="Coville G.J."/>
            <person name="Davies J."/>
            <person name="Deadman R."/>
            <person name="Dunn M."/>
            <person name="Earthrowl M."/>
            <person name="Ellington A.G."/>
            <person name="Errington H."/>
            <person name="Frankish A."/>
            <person name="Frankland J."/>
            <person name="French L."/>
            <person name="Garner P."/>
            <person name="Garnett J."/>
            <person name="Gay L."/>
            <person name="Ghori M.R.J."/>
            <person name="Gibson R."/>
            <person name="Gilby L.M."/>
            <person name="Gillett W."/>
            <person name="Glithero R.J."/>
            <person name="Grafham D.V."/>
            <person name="Griffiths C."/>
            <person name="Griffiths-Jones S."/>
            <person name="Grocock R."/>
            <person name="Hammond S."/>
            <person name="Harrison E.S.I."/>
            <person name="Hart E."/>
            <person name="Haugen E."/>
            <person name="Heath P.D."/>
            <person name="Holmes S."/>
            <person name="Holt K."/>
            <person name="Howden P.J."/>
            <person name="Hunt A.R."/>
            <person name="Hunt S.E."/>
            <person name="Hunter G."/>
            <person name="Isherwood J."/>
            <person name="James R."/>
            <person name="Johnson C."/>
            <person name="Johnson D."/>
            <person name="Joy A."/>
            <person name="Kay M."/>
            <person name="Kershaw J.K."/>
            <person name="Kibukawa M."/>
            <person name="Kimberley A.M."/>
            <person name="King A."/>
            <person name="Knights A.J."/>
            <person name="Lad H."/>
            <person name="Laird G."/>
            <person name="Lawlor S."/>
            <person name="Leongamornlert D.A."/>
            <person name="Lloyd D.M."/>
            <person name="Loveland J."/>
            <person name="Lovell J."/>
            <person name="Lush M.J."/>
            <person name="Lyne R."/>
            <person name="Martin S."/>
            <person name="Mashreghi-Mohammadi M."/>
            <person name="Matthews L."/>
            <person name="Matthews N.S.W."/>
            <person name="McLaren S."/>
            <person name="Milne S."/>
            <person name="Mistry S."/>
            <person name="Moore M.J.F."/>
            <person name="Nickerson T."/>
            <person name="O'Dell C.N."/>
            <person name="Oliver K."/>
            <person name="Palmeiri A."/>
            <person name="Palmer S.A."/>
            <person name="Parker A."/>
            <person name="Patel D."/>
            <person name="Pearce A.V."/>
            <person name="Peck A.I."/>
            <person name="Pelan S."/>
            <person name="Phelps K."/>
            <person name="Phillimore B.J."/>
            <person name="Plumb R."/>
            <person name="Rajan J."/>
            <person name="Raymond C."/>
            <person name="Rouse G."/>
            <person name="Saenphimmachak C."/>
            <person name="Sehra H.K."/>
            <person name="Sheridan E."/>
            <person name="Shownkeen R."/>
            <person name="Sims S."/>
            <person name="Skuce C.D."/>
            <person name="Smith M."/>
            <person name="Steward C."/>
            <person name="Subramanian S."/>
            <person name="Sycamore N."/>
            <person name="Tracey A."/>
            <person name="Tromans A."/>
            <person name="Van Helmond Z."/>
            <person name="Wall M."/>
            <person name="Wallis J.M."/>
            <person name="White S."/>
            <person name="Whitehead S.L."/>
            <person name="Wilkinson J.E."/>
            <person name="Willey D.L."/>
            <person name="Williams H."/>
            <person name="Wilming L."/>
            <person name="Wray P.W."/>
            <person name="Wu Z."/>
            <person name="Coulson A."/>
            <person name="Vaudin M."/>
            <person name="Sulston J.E."/>
            <person name="Durbin R.M."/>
            <person name="Hubbard T."/>
            <person name="Wooster R."/>
            <person name="Dunham I."/>
            <person name="Carter N.P."/>
            <person name="McVean G."/>
            <person name="Ross M.T."/>
            <person name="Harrow J."/>
            <person name="Olson M.V."/>
            <person name="Beck S."/>
            <person name="Rogers J."/>
            <person name="Bentley D.R."/>
        </authorList>
    </citation>
    <scope>NUCLEOTIDE SEQUENCE [LARGE SCALE GENOMIC DNA]</scope>
</reference>
<reference key="13">
    <citation type="submission" date="2005-07" db="EMBL/GenBank/DDBJ databases">
        <authorList>
            <person name="Mural R.J."/>
            <person name="Istrail S."/>
            <person name="Sutton G.G."/>
            <person name="Florea L."/>
            <person name="Halpern A.L."/>
            <person name="Mobarry C.M."/>
            <person name="Lippert R."/>
            <person name="Walenz B."/>
            <person name="Shatkay H."/>
            <person name="Dew I."/>
            <person name="Miller J.R."/>
            <person name="Flanigan M.J."/>
            <person name="Edwards N.J."/>
            <person name="Bolanos R."/>
            <person name="Fasulo D."/>
            <person name="Halldorsson B.V."/>
            <person name="Hannenhalli S."/>
            <person name="Turner R."/>
            <person name="Yooseph S."/>
            <person name="Lu F."/>
            <person name="Nusskern D.R."/>
            <person name="Shue B.C."/>
            <person name="Zheng X.H."/>
            <person name="Zhong F."/>
            <person name="Delcher A.L."/>
            <person name="Huson D.H."/>
            <person name="Kravitz S.A."/>
            <person name="Mouchard L."/>
            <person name="Reinert K."/>
            <person name="Remington K.A."/>
            <person name="Clark A.G."/>
            <person name="Waterman M.S."/>
            <person name="Eichler E.E."/>
            <person name="Adams M.D."/>
            <person name="Hunkapiller M.W."/>
            <person name="Myers E.W."/>
            <person name="Venter J.C."/>
        </authorList>
    </citation>
    <scope>NUCLEOTIDE SEQUENCE [LARGE SCALE GENOMIC DNA]</scope>
</reference>
<reference key="14">
    <citation type="journal article" date="2004" name="Genome Res.">
        <title>The status, quality, and expansion of the NIH full-length cDNA project: the Mammalian Gene Collection (MGC).</title>
        <authorList>
            <consortium name="The MGC Project Team"/>
        </authorList>
    </citation>
    <scope>NUCLEOTIDE SEQUENCE [LARGE SCALE MRNA] (ISOFORM 1)</scope>
    <source>
        <tissue>Eye</tissue>
        <tissue>Lymph</tissue>
    </source>
</reference>
<reference key="15">
    <citation type="journal article" date="2003" name="Nat. Cell Biol.">
        <title>Inhibition of caspase-9 through phosphorylation at Thr 125 by ERK MAPK.</title>
        <authorList>
            <person name="Allan L.A."/>
            <person name="Morrice N."/>
            <person name="Brady S."/>
            <person name="Magee G."/>
            <person name="Pathak S."/>
            <person name="Clarke P.R."/>
        </authorList>
    </citation>
    <scope>PHOSPHORYLATION AT THR-125</scope>
</reference>
<reference key="16">
    <citation type="journal article" date="2004" name="Mol. Cell">
        <title>Dual role of BRUCE as an antiapoptotic IAP and a chimeric E2/E3 ubiquitin ligase.</title>
        <authorList>
            <person name="Bartke T."/>
            <person name="Pohl C."/>
            <person name="Pyrowolakis G."/>
            <person name="Jentsch S."/>
        </authorList>
    </citation>
    <scope>INTERACTION WITH BIRC6/BRUCE</scope>
</reference>
<reference key="17">
    <citation type="journal article" date="2005" name="J. Biol. Chem.">
        <title>c-Abl tyrosine kinase regulates caspase-9 autocleavage in the apoptotic response to DNA damage.</title>
        <authorList>
            <person name="Raina D."/>
            <person name="Pandey P."/>
            <person name="Ahmad R."/>
            <person name="Bharti A."/>
            <person name="Ren J."/>
            <person name="Kharbanda S."/>
            <person name="Weichselbaum R."/>
            <person name="Kufe D."/>
        </authorList>
    </citation>
    <scope>FUNCTION IN APOPTOSIS</scope>
    <scope>INTERACTION WITH ABL1</scope>
    <scope>PROTEOLYTIC PROCESSING</scope>
    <scope>PHOSPHORYLATION AT TYR-153 BY ABL1</scope>
    <scope>MUTAGENESIS OF TYR-153</scope>
</reference>
<reference key="18">
    <citation type="journal article" date="2006" name="Circ. Res.">
        <title>Overexpression of HAX-1 protects cardiac myocytes from apoptosis through caspase-9 inhibition.</title>
        <authorList>
            <person name="Han Y."/>
            <person name="Chen Y.S."/>
            <person name="Liu Z."/>
            <person name="Bodyak N."/>
            <person name="Rigor D."/>
            <person name="Bisping E."/>
            <person name="Pu W.T."/>
            <person name="Kang P.M."/>
        </authorList>
    </citation>
    <scope>INTERACTION WITH HAX1</scope>
    <scope>TISSUE SPECIFICITY</scope>
    <scope>DEVELOPMENTAL STAGE</scope>
</reference>
<reference key="19">
    <citation type="journal article" date="2006" name="J. Biol. Chem.">
        <title>Caspase-7 is directly activated by the approximately 700-kDa apoptosome complex and is released as a stable XIAP-caspase-7 approximately 200-kDa complex.</title>
        <authorList>
            <person name="Twiddy D."/>
            <person name="Cohen G.M."/>
            <person name="Macfarlane M."/>
            <person name="Cain K."/>
        </authorList>
    </citation>
    <scope>FUNCTION</scope>
</reference>
<reference key="20">
    <citation type="journal article" date="2006" name="Mol. Cell">
        <title>Engineered hybrid dimers: tracking the activation pathway of caspase-7.</title>
        <authorList>
            <person name="Denault J.B."/>
            <person name="Bekes M."/>
            <person name="Scott F.L."/>
            <person name="Sexton K.M."/>
            <person name="Bogyo M."/>
            <person name="Salvesen G.S."/>
        </authorList>
    </citation>
    <scope>FUNCTION</scope>
    <scope>CATALYTIC ACTIVITY</scope>
</reference>
<reference key="21">
    <citation type="journal article" date="2008" name="Proc. Natl. Acad. Sci. U.S.A.">
        <title>A quantitative atlas of mitotic phosphorylation.</title>
        <authorList>
            <person name="Dephoure N."/>
            <person name="Zhou C."/>
            <person name="Villen J."/>
            <person name="Beausoleil S.A."/>
            <person name="Bakalarski C.E."/>
            <person name="Elledge S.J."/>
            <person name="Gygi S.P."/>
        </authorList>
    </citation>
    <scope>PHOSPHORYLATION [LARGE SCALE ANALYSIS] AT THR-125; SER-302 AND SER-307</scope>
    <scope>IDENTIFICATION BY MASS SPECTROMETRY [LARGE SCALE ANALYSIS]</scope>
    <source>
        <tissue>Cervix carcinoma</tissue>
    </source>
</reference>
<reference key="22">
    <citation type="journal article" date="2009" name="Cell. Physiol. Biochem.">
        <title>HIP1R interacts with a member of Bcl-2 family, BCL2L10, and induces BAK-dependent cell death.</title>
        <authorList>
            <person name="Kim J.H."/>
            <person name="Yoon S."/>
            <person name="Won M."/>
            <person name="Sim S.H."/>
            <person name="Ko J.J."/>
            <person name="Han S."/>
            <person name="Lee K.A."/>
            <person name="Lee K."/>
            <person name="Bae J."/>
        </authorList>
    </citation>
    <scope>INTERACTION WITH BCL2L10</scope>
</reference>
<reference key="23">
    <citation type="journal article" date="2009" name="J. Proteomics">
        <title>Comparative proteomics analysis of caspase-9-protein complexes in untreated and cytochrome c/dATP stimulated lysates of NSCLC cells.</title>
        <authorList>
            <person name="Checinska A."/>
            <person name="Giaccone G."/>
            <person name="Rodriguez J.A."/>
            <person name="Kruyt F.A.E."/>
            <person name="Jimenez C.R."/>
        </authorList>
    </citation>
    <scope>INTERACTION WITH EFHD2</scope>
</reference>
<reference key="24">
    <citation type="journal article" date="2010" name="Sci. Signal.">
        <title>Quantitative phosphoproteomics reveals widespread full phosphorylation site occupancy during mitosis.</title>
        <authorList>
            <person name="Olsen J.V."/>
            <person name="Vermeulen M."/>
            <person name="Santamaria A."/>
            <person name="Kumar C."/>
            <person name="Miller M.L."/>
            <person name="Jensen L.J."/>
            <person name="Gnad F."/>
            <person name="Cox J."/>
            <person name="Jensen T.S."/>
            <person name="Nigg E.A."/>
            <person name="Brunak S."/>
            <person name="Mann M."/>
        </authorList>
    </citation>
    <scope>PHOSPHORYLATION [LARGE SCALE ANALYSIS] AT SER-307</scope>
    <scope>IDENTIFICATION BY MASS SPECTROMETRY [LARGE SCALE ANALYSIS]</scope>
    <source>
        <tissue>Cervix carcinoma</tissue>
    </source>
</reference>
<reference key="25">
    <citation type="journal article" date="2013" name="J. Proteome Res.">
        <title>Toward a comprehensive characterization of a human cancer cell phosphoproteome.</title>
        <authorList>
            <person name="Zhou H."/>
            <person name="Di Palma S."/>
            <person name="Preisinger C."/>
            <person name="Peng M."/>
            <person name="Polat A.N."/>
            <person name="Heck A.J."/>
            <person name="Mohammed S."/>
        </authorList>
    </citation>
    <scope>PHOSPHORYLATION [LARGE SCALE ANALYSIS] AT SER-310</scope>
    <scope>IDENTIFICATION BY MASS SPECTROMETRY [LARGE SCALE ANALYSIS]</scope>
    <source>
        <tissue>Cervix carcinoma</tissue>
        <tissue>Erythroleukemia</tissue>
    </source>
</reference>
<reference key="26">
    <citation type="journal article" date="2017" name="Structure">
        <title>Dual site phosphorylation of caspase-7 by PAK2 blocks apoptotic activity by two distinct mechanisms.</title>
        <authorList>
            <person name="Eron S.J."/>
            <person name="Raghupathi K."/>
            <person name="Hardy J.A."/>
        </authorList>
    </citation>
    <scope>FUNCTION</scope>
    <scope>CATALYTIC ACTIVITY</scope>
</reference>
<reference key="27">
    <citation type="journal article" date="2022" name="MBio">
        <title>Calmodulin binding activates chromobacterium CopC effector to ADP-riboxanate host apoptotic caspases.</title>
        <authorList>
            <person name="Liu Y."/>
            <person name="Zeng H."/>
            <person name="Hou Y."/>
            <person name="Li Z."/>
            <person name="Li L."/>
            <person name="Song X."/>
            <person name="Ding J."/>
            <person name="Shao F."/>
            <person name="Xu Y."/>
        </authorList>
    </citation>
    <scope>FUNCTION</scope>
    <scope>ADP-RIBOXANATION AT ARG-355 (MICROBIAL INFECTION)</scope>
    <scope>MUTAGENESIS OF ARG-355</scope>
</reference>
<reference key="28">
    <citation type="journal article" date="2022" name="Mol. Cell">
        <title>Pathogen hijacks programmed cell death signaling by arginine ADPR-deacylization of caspases.</title>
        <authorList>
            <person name="Peng T."/>
            <person name="Tao X."/>
            <person name="Xia Z."/>
            <person name="Hu S."/>
            <person name="Xue J."/>
            <person name="Zhu Q."/>
            <person name="Pan X."/>
            <person name="Zhang Q."/>
            <person name="Li S."/>
        </authorList>
    </citation>
    <scope>FUNCTION</scope>
    <scope>ADP-RIBOXANATION AT ARG-355 (MICROBIAL INFECTION)</scope>
</reference>
<reference key="29">
    <citation type="journal article" date="2023" name="Science">
        <title>Structural basis for SMAC-mediated antagonism of caspase inhibition by the giant ubiquitin ligase BIRC6.</title>
        <authorList>
            <person name="Dietz L."/>
            <person name="Ellison C.J."/>
            <person name="Riechmann C."/>
            <person name="Cassidy C.K."/>
            <person name="Felfoldi F.D."/>
            <person name="Pinto-Fernandez A."/>
            <person name="Kessler B.M."/>
            <person name="Elliott P.R."/>
        </authorList>
    </citation>
    <scope>FUNCTION</scope>
    <scope>ACTIVITY REGULATION</scope>
    <scope>UBIQUITINATION BY BIRC6</scope>
</reference>
<reference key="30">
    <citation type="journal article" date="2023" name="Science">
        <title>Structural basis for regulation of apoptosis and autophagy by the BIRC6/SMAC complex.</title>
        <authorList>
            <person name="Ehrmann J.F."/>
            <person name="Grabarczyk D.B."/>
            <person name="Heinke M."/>
            <person name="Deszcz L."/>
            <person name="Kurzbauer R."/>
            <person name="Hudecz O."/>
            <person name="Shulkina A."/>
            <person name="Gogova R."/>
            <person name="Meinhart A."/>
            <person name="Versteeg G.A."/>
            <person name="Clausen T."/>
        </authorList>
    </citation>
    <scope>FUNCTION</scope>
    <scope>ACTIVITY REGULATION</scope>
    <scope>UBIQUITINATION BY BIRC6</scope>
</reference>
<reference key="31">
    <citation type="journal article" date="2001" name="Proc. Natl. Acad. Sci. U.S.A.">
        <title>Dimer formation drives the activation of the cell death protease caspase 9.</title>
        <authorList>
            <person name="Renatus M."/>
            <person name="Stennicke H.R."/>
            <person name="Scott F.L."/>
            <person name="Liddington R.C."/>
            <person name="Salvesen G.S."/>
        </authorList>
    </citation>
    <scope>X-RAY CRYSTALLOGRAPHY (2.8 ANGSTROMS) OF 140-416</scope>
    <scope>SUBUNIT</scope>
</reference>
<reference key="32">
    <citation type="journal article" date="2003" name="Mol. Cell">
        <title>Mechanism of XIAP-mediated inhibition of caspase-9.</title>
        <authorList>
            <person name="Shiozaki E.N."/>
            <person name="Chai J."/>
            <person name="Rigotti D.J."/>
            <person name="Riedl S.J."/>
            <person name="Li P."/>
            <person name="Srinivasula S.M."/>
            <person name="Alnemri E.S."/>
            <person name="Fairman R."/>
            <person name="Shi Y."/>
        </authorList>
    </citation>
    <scope>X-RAY CRYSTALLOGRAPHY (2.4 ANGSTROMS) OF 140-416 IN COMPLEX WITH BIRC4/XIAP</scope>
</reference>
<reference key="33">
    <citation type="journal article" date="2013" name="PLoS ONE">
        <title>The E. coli effector protein NleF is a caspase inhibitor.</title>
        <authorList>
            <person name="Blasche S."/>
            <person name="Mortl M."/>
            <person name="Steuber H."/>
            <person name="Siszler G."/>
            <person name="Nisa S."/>
            <person name="Schwarz F."/>
            <person name="Lavrik I."/>
            <person name="Gronewold T.M."/>
            <person name="Maskos K."/>
            <person name="Donnenberg M.S."/>
            <person name="Ullmann D."/>
            <person name="Uetz P."/>
            <person name="Kogl M."/>
        </authorList>
    </citation>
    <scope>X-RAY CRYSTALLOGRAPHY (3.49 ANGSTROMS) OF 140-416 IN COMPLEX WITH E.COLI NLEF</scope>
    <scope>INTERACTION WITH E.COLI NLEF</scope>
    <scope>SUBUNIT</scope>
    <scope>CATALYTIC ACTIVITY</scope>
    <scope>FUNCTION</scope>
    <scope>ACTIVITY REGULATION</scope>
</reference>
<accession>P55211</accession>
<accession>B4E1A3</accession>
<accession>O95348</accession>
<accession>Q53Y70</accession>
<accession>Q5JRU9</accession>
<accession>Q5UGI1</accession>
<accession>Q92852</accession>
<accession>Q9BQ62</accession>
<accession>Q9UEQ3</accession>
<accession>Q9UIJ8</accession>
<gene>
    <name type="primary">CASP9</name>
    <name type="synonym">MCH6</name>
</gene>
<evidence type="ECO:0000250" key="1"/>
<evidence type="ECO:0000255" key="2"/>
<evidence type="ECO:0000255" key="3">
    <source>
        <dbReference type="PROSITE-ProRule" id="PRU00046"/>
    </source>
</evidence>
<evidence type="ECO:0000256" key="4">
    <source>
        <dbReference type="SAM" id="MobiDB-lite"/>
    </source>
</evidence>
<evidence type="ECO:0000269" key="5">
    <source>
    </source>
</evidence>
<evidence type="ECO:0000269" key="6">
    <source>
    </source>
</evidence>
<evidence type="ECO:0000269" key="7">
    <source>
    </source>
</evidence>
<evidence type="ECO:0000269" key="8">
    <source>
    </source>
</evidence>
<evidence type="ECO:0000269" key="9">
    <source>
    </source>
</evidence>
<evidence type="ECO:0000269" key="10">
    <source>
    </source>
</evidence>
<evidence type="ECO:0000269" key="11">
    <source>
    </source>
</evidence>
<evidence type="ECO:0000269" key="12">
    <source>
    </source>
</evidence>
<evidence type="ECO:0000269" key="13">
    <source>
    </source>
</evidence>
<evidence type="ECO:0000269" key="14">
    <source>
    </source>
</evidence>
<evidence type="ECO:0000269" key="15">
    <source>
    </source>
</evidence>
<evidence type="ECO:0000269" key="16">
    <source>
    </source>
</evidence>
<evidence type="ECO:0000269" key="17">
    <source>
    </source>
</evidence>
<evidence type="ECO:0000269" key="18">
    <source>
    </source>
</evidence>
<evidence type="ECO:0000269" key="19">
    <source>
    </source>
</evidence>
<evidence type="ECO:0000269" key="20">
    <source>
    </source>
</evidence>
<evidence type="ECO:0000269" key="21">
    <source>
    </source>
</evidence>
<evidence type="ECO:0000269" key="22">
    <source>
    </source>
</evidence>
<evidence type="ECO:0000269" key="23">
    <source>
    </source>
</evidence>
<evidence type="ECO:0000269" key="24">
    <source>
    </source>
</evidence>
<evidence type="ECO:0000269" key="25">
    <source ref="9"/>
</evidence>
<evidence type="ECO:0000303" key="26">
    <source>
    </source>
</evidence>
<evidence type="ECO:0000303" key="27">
    <source>
    </source>
</evidence>
<evidence type="ECO:0000303" key="28">
    <source>
    </source>
</evidence>
<evidence type="ECO:0000303" key="29">
    <source>
    </source>
</evidence>
<evidence type="ECO:0000303" key="30">
    <source ref="5"/>
</evidence>
<evidence type="ECO:0000303" key="31">
    <source ref="6"/>
</evidence>
<evidence type="ECO:0000305" key="32"/>
<evidence type="ECO:0007744" key="33">
    <source>
    </source>
</evidence>
<evidence type="ECO:0007744" key="34">
    <source>
    </source>
</evidence>
<evidence type="ECO:0007744" key="35">
    <source>
    </source>
</evidence>
<evidence type="ECO:0007829" key="36">
    <source>
        <dbReference type="PDB" id="1JXQ"/>
    </source>
</evidence>
<evidence type="ECO:0007829" key="37">
    <source>
        <dbReference type="PDB" id="1NW9"/>
    </source>
</evidence>
<evidence type="ECO:0007829" key="38">
    <source>
        <dbReference type="PDB" id="2AR9"/>
    </source>
</evidence>
<evidence type="ECO:0007829" key="39">
    <source>
        <dbReference type="PDB" id="3D9T"/>
    </source>
</evidence>
<evidence type="ECO:0007829" key="40">
    <source>
        <dbReference type="PDB" id="3V3K"/>
    </source>
</evidence>
<evidence type="ECO:0007829" key="41">
    <source>
        <dbReference type="PDB" id="4RHW"/>
    </source>
</evidence>
<feature type="propeptide" id="PRO_0000004640" evidence="2">
    <location>
        <begin position="1"/>
        <end status="unknown"/>
    </location>
</feature>
<feature type="chain" id="PRO_0000004641" description="Caspase-9 subunit p35">
    <location>
        <begin status="unknown"/>
        <end position="315"/>
    </location>
</feature>
<feature type="propeptide" id="PRO_0000004642">
    <location>
        <begin position="316"/>
        <end position="330"/>
    </location>
</feature>
<feature type="chain" id="PRO_0000004643" description="Caspase-9 subunit p10">
    <location>
        <begin position="331"/>
        <end position="416"/>
    </location>
</feature>
<feature type="domain" description="CARD" evidence="3">
    <location>
        <begin position="1"/>
        <end position="92"/>
    </location>
</feature>
<feature type="region of interest" description="Disordered" evidence="4">
    <location>
        <begin position="294"/>
        <end position="320"/>
    </location>
</feature>
<feature type="active site" evidence="1">
    <location>
        <position position="237"/>
    </location>
</feature>
<feature type="active site" evidence="1">
    <location>
        <position position="287"/>
    </location>
</feature>
<feature type="modified residue" description="Phosphothreonine; by MAPK1" evidence="8 33">
    <location>
        <position position="125"/>
    </location>
</feature>
<feature type="modified residue" description="Phosphotyrosine; by ABL1" evidence="10">
    <location>
        <position position="153"/>
    </location>
</feature>
<feature type="modified residue" description="Phosphoserine" evidence="33">
    <location>
        <position position="302"/>
    </location>
</feature>
<feature type="modified residue" description="Phosphoserine" evidence="33 34">
    <location>
        <position position="307"/>
    </location>
</feature>
<feature type="modified residue" description="Phosphoserine" evidence="35">
    <location>
        <position position="310"/>
    </location>
</feature>
<feature type="modified residue" description="(Microbial infection) ADP-riboxanated arginine" evidence="19 20">
    <location>
        <position position="355"/>
    </location>
</feature>
<feature type="splice variant" id="VSP_044256" description="In isoform 4." evidence="27">
    <location>
        <begin position="1"/>
        <end position="83"/>
    </location>
</feature>
<feature type="splice variant" id="VSP_000818" description="In isoform 2." evidence="26 29 30 31">
    <location>
        <begin position="140"/>
        <end position="289"/>
    </location>
</feature>
<feature type="splice variant" id="VSP_043910" description="In isoform 3." evidence="28">
    <original>AYI</original>
    <variation>TVL</variation>
    <location>
        <begin position="152"/>
        <end position="154"/>
    </location>
</feature>
<feature type="splice variant" id="VSP_043911" description="In isoform 3." evidence="28">
    <location>
        <begin position="155"/>
        <end position="416"/>
    </location>
</feature>
<feature type="sequence variant" id="VAR_015415" description="In dbSNP:rs1052571." evidence="12 23 24 25">
    <original>A</original>
    <variation>V</variation>
    <location>
        <position position="28"/>
    </location>
</feature>
<feature type="sequence variant" id="VAR_015416" description="In dbSNP:rs4646008." evidence="25">
    <original>S</original>
    <variation>L</variation>
    <location>
        <position position="99"/>
    </location>
</feature>
<feature type="sequence variant" id="VAR_015417" description="In dbSNP:rs2308941." evidence="25">
    <original>T</original>
    <variation>I</variation>
    <location>
        <position position="102"/>
    </location>
</feature>
<feature type="sequence variant" id="VAR_015418" description="In dbSNP:rs2308938." evidence="25">
    <original>L</original>
    <variation>V</variation>
    <location>
        <position position="106"/>
    </location>
</feature>
<feature type="sequence variant" id="VAR_015419" description="In dbSNP:rs2020897." evidence="25">
    <original>E</original>
    <variation>D</variation>
    <location>
        <position position="114"/>
    </location>
</feature>
<feature type="sequence variant" id="VAR_059198" description="In dbSNP:rs1132312.">
    <original>F</original>
    <variation>L</variation>
    <location>
        <position position="136"/>
    </location>
</feature>
<feature type="sequence variant" id="VAR_015420" description="In dbSNP:rs2308950." evidence="25">
    <original>R</original>
    <variation>H</variation>
    <location>
        <position position="173"/>
    </location>
</feature>
<feature type="sequence variant" id="VAR_016131" description="In dbSNP:rs2308949.">
    <original>G</original>
    <variation>R</variation>
    <location>
        <position position="176"/>
    </location>
</feature>
<feature type="sequence variant" id="VAR_022053" description="In dbSNP:rs9282624.">
    <original>I</original>
    <variation>M</variation>
    <location>
        <position position="185"/>
    </location>
</feature>
<feature type="sequence variant" id="VAR_016132" description="In dbSNP:rs2308939.">
    <original>R</original>
    <variation>C</variation>
    <location>
        <position position="192"/>
    </location>
</feature>
<feature type="sequence variant" id="VAR_015421" description="In dbSNP:rs1052576." evidence="23 25">
    <original>Q</original>
    <variation>R</variation>
    <location>
        <position position="221"/>
    </location>
</feature>
<feature type="mutagenesis site" description="Inhibits tyrosine phosphorylation. Reduces caspase-9 subunit p35 formation in response to genotoxic stress. Attenuates ABL1/c-Abl-mediated caspase-3 activation, DNA fragmentation and UV irradiation-induced apoptosis." evidence="10">
    <original>Y</original>
    <variation>F</variation>
    <location>
        <position position="153"/>
    </location>
</feature>
<feature type="mutagenesis site" description="Abolished ADP-riboxanation by C.violaceum CopC." evidence="20">
    <original>R</original>
    <variation>A</variation>
    <location>
        <position position="355"/>
    </location>
</feature>
<feature type="sequence conflict" description="In Ref. 2; AAC50776, 3; BAA82697 and 6; BAA87905." evidence="32" ref="2 3 6">
    <original>R</original>
    <variation>S</variation>
    <location>
        <position position="32"/>
    </location>
</feature>
<feature type="sequence conflict" description="In Ref. 1; AAC50640." evidence="32" ref="1">
    <original>A</original>
    <variation>G</variation>
    <location>
        <position position="96"/>
    </location>
</feature>
<feature type="sequence conflict" description="In Ref. 2; AAC50776 and 3; BAA82697." evidence="32" ref="2 3">
    <original>L</original>
    <variation>P</variation>
    <location>
        <position position="197"/>
    </location>
</feature>
<feature type="helix" evidence="41">
    <location>
        <begin position="3"/>
        <end position="11"/>
    </location>
</feature>
<feature type="helix" evidence="41">
    <location>
        <begin position="13"/>
        <end position="19"/>
    </location>
</feature>
<feature type="turn" evidence="41">
    <location>
        <begin position="23"/>
        <end position="25"/>
    </location>
</feature>
<feature type="helix" evidence="41">
    <location>
        <begin position="26"/>
        <end position="31"/>
    </location>
</feature>
<feature type="helix" evidence="41">
    <location>
        <begin position="37"/>
        <end position="44"/>
    </location>
</feature>
<feature type="helix" evidence="41">
    <location>
        <begin position="51"/>
        <end position="62"/>
    </location>
</feature>
<feature type="helix" evidence="41">
    <location>
        <begin position="69"/>
        <end position="79"/>
    </location>
</feature>
<feature type="helix" evidence="41">
    <location>
        <begin position="83"/>
        <end position="93"/>
    </location>
</feature>
<feature type="helix" evidence="37">
    <location>
        <begin position="143"/>
        <end position="147"/>
    </location>
</feature>
<feature type="turn" evidence="37">
    <location>
        <begin position="149"/>
        <end position="151"/>
    </location>
</feature>
<feature type="strand" evidence="36">
    <location>
        <begin position="157"/>
        <end position="159"/>
    </location>
</feature>
<feature type="strand" evidence="37">
    <location>
        <begin position="161"/>
        <end position="167"/>
    </location>
</feature>
<feature type="helix" evidence="37">
    <location>
        <begin position="173"/>
        <end position="175"/>
    </location>
</feature>
<feature type="helix" evidence="37">
    <location>
        <begin position="183"/>
        <end position="196"/>
    </location>
</feature>
<feature type="strand" evidence="37">
    <location>
        <begin position="199"/>
        <end position="206"/>
    </location>
</feature>
<feature type="helix" evidence="37">
    <location>
        <begin position="209"/>
        <end position="221"/>
    </location>
</feature>
<feature type="helix" evidence="38">
    <location>
        <begin position="224"/>
        <end position="226"/>
    </location>
</feature>
<feature type="strand" evidence="37">
    <location>
        <begin position="228"/>
        <end position="239"/>
    </location>
</feature>
<feature type="strand" evidence="37">
    <location>
        <begin position="244"/>
        <end position="246"/>
    </location>
</feature>
<feature type="strand" evidence="37">
    <location>
        <begin position="249"/>
        <end position="251"/>
    </location>
</feature>
<feature type="strand" evidence="37">
    <location>
        <begin position="257"/>
        <end position="259"/>
    </location>
</feature>
<feature type="helix" evidence="37">
    <location>
        <begin position="260"/>
        <end position="265"/>
    </location>
</feature>
<feature type="turn" evidence="37">
    <location>
        <begin position="269"/>
        <end position="271"/>
    </location>
</feature>
<feature type="helix" evidence="37">
    <location>
        <begin position="273"/>
        <end position="275"/>
    </location>
</feature>
<feature type="strand" evidence="37">
    <location>
        <begin position="280"/>
        <end position="287"/>
    </location>
</feature>
<feature type="strand" evidence="39">
    <location>
        <begin position="317"/>
        <end position="319"/>
    </location>
</feature>
<feature type="strand" evidence="37">
    <location>
        <begin position="340"/>
        <end position="346"/>
    </location>
</feature>
<feature type="strand" evidence="37">
    <location>
        <begin position="351"/>
        <end position="353"/>
    </location>
</feature>
<feature type="strand" evidence="40">
    <location>
        <begin position="354"/>
        <end position="356"/>
    </location>
</feature>
<feature type="turn" evidence="36">
    <location>
        <begin position="357"/>
        <end position="359"/>
    </location>
</feature>
<feature type="helix" evidence="37">
    <location>
        <begin position="362"/>
        <end position="374"/>
    </location>
</feature>
<feature type="turn" evidence="37">
    <location>
        <begin position="375"/>
        <end position="377"/>
    </location>
</feature>
<feature type="helix" evidence="37">
    <location>
        <begin position="380"/>
        <end position="392"/>
    </location>
</feature>
<feature type="strand" evidence="36">
    <location>
        <begin position="395"/>
        <end position="398"/>
    </location>
</feature>
<feature type="strand" evidence="36">
    <location>
        <begin position="402"/>
        <end position="406"/>
    </location>
</feature>
<feature type="strand" evidence="37">
    <location>
        <begin position="408"/>
        <end position="410"/>
    </location>
</feature>
<name>CASP9_HUMAN</name>
<protein>
    <recommendedName>
        <fullName>Caspase-9</fullName>
        <shortName>CASP-9</shortName>
        <ecNumber evidence="14 17 18">3.4.22.62</ecNumber>
    </recommendedName>
    <alternativeName>
        <fullName>Apoptotic protease Mch-6</fullName>
    </alternativeName>
    <alternativeName>
        <fullName>Apoptotic protease-activating factor 3</fullName>
        <shortName>APAF-3</shortName>
    </alternativeName>
    <alternativeName>
        <fullName>ICE-like apoptotic protease 6</fullName>
        <shortName>ICE-LAP6</shortName>
    </alternativeName>
    <component>
        <recommendedName>
            <fullName>Caspase-9 subunit p35</fullName>
        </recommendedName>
    </component>
    <component>
        <recommendedName>
            <fullName>Caspase-9 subunit p10</fullName>
        </recommendedName>
    </component>
</protein>
<proteinExistence type="evidence at protein level"/>
<comment type="function">
    <text evidence="10 11 14 17 18 19 20">Involved in the activation cascade of caspases responsible for apoptosis execution. Binding of caspase-9 to Apaf-1 leads to activation of the protease which then cleaves and activates effector caspases caspase-3 (CASP3) or caspase-7 (CASP7). Promotes DNA damage-induced apoptosis in a ABL1/c-Abl-dependent manner. Proteolytically cleaves poly(ADP-ribose) polymerase (PARP). Cleaves BIRC6 following inhibition of BIRC6-caspase binding by DIABLO/SMAC (PubMed:36758105, PubMed:36758106).</text>
</comment>
<comment type="function">
    <molecule>Isoform 2</molecule>
    <text evidence="5">Lacks activity is an dominant-negative inhibitor of caspase-9.</text>
</comment>
<comment type="catalytic activity">
    <reaction evidence="14 17 18">
        <text>Strict requirement for an Asp residue at position P1 and with a marked preference for His at position P2. It has a preferred cleavage sequence of Leu-Gly-His-Asp-|-Xaa.</text>
        <dbReference type="EC" id="3.4.22.62"/>
    </reaction>
</comment>
<comment type="activity regulation">
    <text evidence="17 21 22">Inhibited by the effector protein NleF that is produced by pathogenic E.coli; this inhibits apoptosis (PubMed:23516580). Inhibited by BIRC6; following inhibition of BIRC6-caspase binding by DIABLO/SMAC, BIRC6 is subjected to caspase cleavage, leading to an increase in active caspases (PubMed:36758105, PubMed:36758106).</text>
</comment>
<comment type="subunit">
    <text evidence="6 7 9 10 13 15 16 17">Heterotetramer that consists of two anti-parallel arranged heterodimers, each one formed by a 35 kDa (p35) and a 10 kDa (p10) subunit. Caspase-9 and APAF1 bind to each other via their respective NH2-terminal CED-3 homologous domains in the presence of cytochrome C and ATP. Interacts (inactive form) with EFHD2. Interacts with HAX1. Interacts with BIRC2/c-IAP1, XIAP/BIRC4, BIRC5/survivin, BIRC6/bruce and BIRC7/livin. Interacts with ABL1 (via SH3 domain); the interaction is direct and increases in the response of cells to genotoxic stress and ABL1/c-Abl activation. Interacts with BCL2L10 (PubMed:19255499). Interacts with NleF from pathogenic E.coli.</text>
</comment>
<comment type="interaction">
    <interactant intactId="EBI-516799">
        <id>P55211</id>
    </interactant>
    <interactant intactId="EBI-446492">
        <id>O14727</id>
        <label>APAF1</label>
    </interactant>
    <organismsDiffer>false</organismsDiffer>
    <experiments>22</experiments>
</comment>
<comment type="interaction">
    <interactant intactId="EBI-516799">
        <id>P55211</id>
    </interactant>
    <interactant intactId="EBI-514538">
        <id>Q13490</id>
        <label>BIRC2</label>
    </interactant>
    <organismsDiffer>false</organismsDiffer>
    <experiments>12</experiments>
</comment>
<comment type="interaction">
    <interactant intactId="EBI-516799">
        <id>P55211</id>
    </interactant>
    <interactant intactId="EBI-517623">
        <id>Q96CA5</id>
        <label>BIRC7</label>
    </interactant>
    <organismsDiffer>false</organismsDiffer>
    <experiments>12</experiments>
</comment>
<comment type="interaction">
    <interactant intactId="EBI-516799">
        <id>P55211</id>
    </interactant>
    <interactant intactId="EBI-2129837">
        <id>Q6PIA0</id>
        <label>BIRC8</label>
    </interactant>
    <organismsDiffer>false</organismsDiffer>
    <experiments>3</experiments>
</comment>
<comment type="interaction">
    <interactant intactId="EBI-516799">
        <id>P55211</id>
    </interactant>
    <interactant intactId="EBI-524064">
        <id>P42574</id>
        <label>CASP3</label>
    </interactant>
    <organismsDiffer>false</organismsDiffer>
    <experiments>2</experiments>
</comment>
<comment type="interaction">
    <interactant intactId="EBI-516799">
        <id>P55211</id>
    </interactant>
    <interactant intactId="EBI-1222919">
        <id>P43146</id>
        <label>DCC</label>
    </interactant>
    <organismsDiffer>false</organismsDiffer>
    <experiments>2</experiments>
</comment>
<comment type="interaction">
    <interactant intactId="EBI-516799">
        <id>P55211</id>
    </interactant>
    <interactant intactId="EBI-747644">
        <id>Q13418</id>
        <label>ILK</label>
    </interactant>
    <organismsDiffer>false</organismsDiffer>
    <experiments>2</experiments>
</comment>
<comment type="interaction">
    <interactant intactId="EBI-516799">
        <id>P55211</id>
    </interactant>
    <interactant intactId="EBI-517127">
        <id>P98170</id>
        <label>XIAP</label>
    </interactant>
    <organismsDiffer>false</organismsDiffer>
    <experiments>23</experiments>
</comment>
<comment type="interaction">
    <interactant intactId="EBI-516799">
        <id>P55211</id>
    </interactant>
    <interactant intactId="EBI-10039292">
        <id>Q8XAL7</id>
        <label>nleF</label>
    </interactant>
    <organismsDiffer>true</organismsDiffer>
    <experiments>6</experiments>
</comment>
<comment type="interaction">
    <interactant intactId="EBI-15553290">
        <id>P55211-1</id>
    </interactant>
    <interactant intactId="EBI-15553290">
        <id>P55211-1</id>
        <label>CASP9</label>
    </interactant>
    <organismsDiffer>false</organismsDiffer>
    <experiments>3</experiments>
</comment>
<comment type="alternative products">
    <event type="alternative splicing"/>
    <isoform>
        <id>P55211-1</id>
        <name>1</name>
        <name>9L</name>
        <name>Alpha</name>
        <sequence type="displayed"/>
    </isoform>
    <isoform>
        <id>P55211-2</id>
        <name>2</name>
        <name>9S</name>
        <name>Beta</name>
        <sequence type="described" ref="VSP_000818"/>
    </isoform>
    <isoform>
        <id>P55211-3</id>
        <name>3</name>
        <name>Gamma</name>
        <sequence type="described" ref="VSP_043910 VSP_043911"/>
    </isoform>
    <isoform>
        <id>P55211-4</id>
        <name>4</name>
        <sequence type="described" ref="VSP_044256"/>
    </isoform>
</comment>
<comment type="tissue specificity">
    <text evidence="13">Ubiquitous, with highest expression in the heart, moderate expression in liver, skeletal muscle, and pancreas. Low levels in all other tissues. Within the heart, specifically expressed in myocytes.</text>
</comment>
<comment type="developmental stage">
    <text evidence="13">Expressed at low levels in fetal heart, at moderate levels in neonate heart, and at high levels in adult heart.</text>
</comment>
<comment type="PTM">
    <text>Cleavages at Asp-315 by granzyme B and at Asp-330 by caspase-3 generate the two active subunits. Caspase-8 and -10 can also be involved in these processing events.</text>
</comment>
<comment type="PTM">
    <text evidence="8 10">Phosphorylated at Thr-125 by MAPK1/ERK2. Phosphorylation at Thr-125 is sufficient to block caspase-9 processing and subsequent caspase-3 activation. Phosphorylation on Tyr-153 by ABL1/c-Abl; occurs in the response of cells to DNA damage.</text>
</comment>
<comment type="PTM">
    <text evidence="19 20">(Microbial infection) ADP-riboxanation by C.violaceum CopC blocks CASP9 processing, preventing CASP9 activation and ability to mediate intrinsic apoptosis.</text>
</comment>
<comment type="PTM">
    <text evidence="21 22">Ubiquitinated by BIRC6; this activity is inhibited by DIABLO/SMAC.</text>
</comment>
<comment type="miscellaneous">
    <molecule>Isoform 3</molecule>
    <text evidence="32">May function as an endogenous apoptotic inhibitor, inhibits the BAX-mediated cleavage of procaspase-3.</text>
</comment>
<comment type="similarity">
    <text evidence="32">Belongs to the peptidase C14A family.</text>
</comment>
<comment type="online information" name="Atlas of Genetics and Cytogenetics in Oncology and Haematology">
    <link uri="https://atlasgeneticsoncology.org/gene/423/CASP9"/>
</comment>
<comment type="online information" name="Wikipedia">
    <link uri="https://en.wikipedia.org/wiki/Caspase-9"/>
    <text>Caspase-9 entry</text>
</comment>